<dbReference type="EC" id="1.1.1.145"/>
<dbReference type="EC" id="5.3.3.1"/>
<dbReference type="EMBL" id="U94848">
    <property type="protein sequence ID" value="AAB96479.1"/>
    <property type="molecule type" value="Genomic_DNA"/>
</dbReference>
<dbReference type="EMBL" id="AY603355">
    <property type="protein sequence ID" value="AAT10555.1"/>
    <property type="molecule type" value="Genomic_DNA"/>
</dbReference>
<dbReference type="PIR" id="T37430">
    <property type="entry name" value="T37430"/>
</dbReference>
<dbReference type="SMR" id="O57245"/>
<dbReference type="UniPathway" id="UPA00062"/>
<dbReference type="Proteomes" id="UP000159908">
    <property type="component" value="Segment"/>
</dbReference>
<dbReference type="Proteomes" id="UP000172909">
    <property type="component" value="Segment"/>
</dbReference>
<dbReference type="GO" id="GO:0003854">
    <property type="term" value="F:3-beta-hydroxy-Delta5-steroid dehydrogenase (NAD+) activity"/>
    <property type="evidence" value="ECO:0007669"/>
    <property type="project" value="UniProtKB-EC"/>
</dbReference>
<dbReference type="GO" id="GO:0004769">
    <property type="term" value="F:steroid Delta-isomerase activity"/>
    <property type="evidence" value="ECO:0007669"/>
    <property type="project" value="UniProtKB-EC"/>
</dbReference>
<dbReference type="GO" id="GO:0006694">
    <property type="term" value="P:steroid biosynthetic process"/>
    <property type="evidence" value="ECO:0007669"/>
    <property type="project" value="UniProtKB-UniPathway"/>
</dbReference>
<dbReference type="FunFam" id="3.40.50.720:FF:000495">
    <property type="entry name" value="3 hydroxysteroid dehydrogenase, putative"/>
    <property type="match status" value="1"/>
</dbReference>
<dbReference type="Gene3D" id="3.40.50.720">
    <property type="entry name" value="NAD(P)-binding Rossmann-like Domain"/>
    <property type="match status" value="1"/>
</dbReference>
<dbReference type="InterPro" id="IPR002225">
    <property type="entry name" value="3Beta_OHSteriod_DH/Estase"/>
</dbReference>
<dbReference type="InterPro" id="IPR050177">
    <property type="entry name" value="Lipid_A_modif_metabolic_enz"/>
</dbReference>
<dbReference type="InterPro" id="IPR036291">
    <property type="entry name" value="NAD(P)-bd_dom_sf"/>
</dbReference>
<dbReference type="PANTHER" id="PTHR43245">
    <property type="entry name" value="BIFUNCTIONAL POLYMYXIN RESISTANCE PROTEIN ARNA"/>
    <property type="match status" value="1"/>
</dbReference>
<dbReference type="PANTHER" id="PTHR43245:SF51">
    <property type="entry name" value="SHORT CHAIN DEHYDROGENASE_REDUCTASE FAMILY 42E, MEMBER 2"/>
    <property type="match status" value="1"/>
</dbReference>
<dbReference type="Pfam" id="PF01073">
    <property type="entry name" value="3Beta_HSD"/>
    <property type="match status" value="1"/>
</dbReference>
<dbReference type="SUPFAM" id="SSF51735">
    <property type="entry name" value="NAD(P)-binding Rossmann-fold domains"/>
    <property type="match status" value="1"/>
</dbReference>
<accession>O57245</accession>
<gene>
    <name type="primary">OPG174</name>
    <name type="ordered locus">MVA157L</name>
    <name type="ordered locus">ACAM3000_MVA_157</name>
</gene>
<reference key="1">
    <citation type="journal article" date="1998" name="Virology">
        <title>The complete genomic sequence of the modified vaccinia Ankara strain: comparison with other orthopoxviruses.</title>
        <authorList>
            <person name="Antoine G."/>
            <person name="Scheiflinger F."/>
            <person name="Dorner F."/>
            <person name="Falkner F.G."/>
        </authorList>
    </citation>
    <scope>NUCLEOTIDE SEQUENCE [LARGE SCALE GENOMIC DNA]</scope>
</reference>
<reference key="2">
    <citation type="submission" date="2004-04" db="EMBL/GenBank/DDBJ databases">
        <authorList>
            <person name="Esposito J.J."/>
            <person name="Frace M."/>
            <person name="Sammons S.A."/>
            <person name="Olsen-Rasmussen M.S."/>
            <person name="Osborne J."/>
            <person name="Khristova M."/>
            <person name="Wohlhueter R.M."/>
        </authorList>
    </citation>
    <scope>NUCLEOTIDE SEQUENCE [LARGE SCALE GENOMIC DNA]</scope>
    <source>
        <strain>Isolate Acambis 3000</strain>
    </source>
</reference>
<organismHost>
    <name type="scientific">Homo sapiens</name>
    <name type="common">Human</name>
    <dbReference type="NCBI Taxonomy" id="9606"/>
</organismHost>
<comment type="function">
    <text evidence="2">Catalyzes the oxidative conversion of Delta(5)-ene-3-beta-hydroxy steroid, and the oxidative conversion of ketosteroids. The 3-beta-HSD enzymatic system plays a crucial role in the biosynthesis of all classes of hormonal steroids. During viral infection, steroid production contributes to virulence by inhibiting the host inflammatory response.</text>
</comment>
<comment type="catalytic activity">
    <reaction evidence="2">
        <text>a 3beta-hydroxy-Delta(5)-steroid + NAD(+) = a 3-oxo-Delta(5)-steroid + NADH + H(+)</text>
        <dbReference type="Rhea" id="RHEA:24076"/>
        <dbReference type="ChEBI" id="CHEBI:1722"/>
        <dbReference type="ChEBI" id="CHEBI:15378"/>
        <dbReference type="ChEBI" id="CHEBI:47907"/>
        <dbReference type="ChEBI" id="CHEBI:57540"/>
        <dbReference type="ChEBI" id="CHEBI:57945"/>
        <dbReference type="EC" id="1.1.1.145"/>
    </reaction>
</comment>
<comment type="catalytic activity">
    <reaction evidence="2">
        <text>a 3-oxo-Delta(5)-steroid = a 3-oxo-Delta(4)-steroid</text>
        <dbReference type="Rhea" id="RHEA:14709"/>
        <dbReference type="ChEBI" id="CHEBI:47907"/>
        <dbReference type="ChEBI" id="CHEBI:47909"/>
        <dbReference type="EC" id="5.3.3.1"/>
    </reaction>
</comment>
<comment type="pathway">
    <text evidence="2">Lipid metabolism; steroid biosynthesis.</text>
</comment>
<comment type="induction">
    <text>Expressed in the early phase of the viral replicative cycle.</text>
</comment>
<comment type="similarity">
    <text evidence="3">Belongs to the 3-beta-HSD family.</text>
</comment>
<feature type="chain" id="PRO_0000087793" description="3 beta-hydroxysteroid dehydrogenase/Delta 5--&gt;4-isomerase">
    <location>
        <begin position="1"/>
        <end position="346"/>
    </location>
</feature>
<feature type="active site" description="Proton acceptor" evidence="1">
    <location>
        <position position="147"/>
    </location>
</feature>
<feature type="binding site" evidence="1">
    <location>
        <position position="151"/>
    </location>
    <ligand>
        <name>NAD(+)</name>
        <dbReference type="ChEBI" id="CHEBI:57540"/>
    </ligand>
</feature>
<protein>
    <recommendedName>
        <fullName>3 beta-hydroxysteroid dehydrogenase/Delta 5--&gt;4-isomerase</fullName>
        <shortName>3-beta-HSD</shortName>
    </recommendedName>
    <domain>
        <recommendedName>
            <fullName>3-beta-hydroxy-Delta(5)-steroid dehydrogenase</fullName>
            <ecNumber>1.1.1.145</ecNumber>
        </recommendedName>
        <alternativeName>
            <fullName>3-beta-hydroxy-5-ene steroid dehydrogenase</fullName>
        </alternativeName>
        <alternativeName>
            <fullName>Progesterone reductase</fullName>
        </alternativeName>
    </domain>
    <domain>
        <recommendedName>
            <fullName>Steroid Delta-isomerase</fullName>
            <ecNumber>5.3.3.1</ecNumber>
        </recommendedName>
        <alternativeName>
            <fullName>Delta-5-3-ketosteroid isomerase</fullName>
        </alternativeName>
    </domain>
</protein>
<name>3BHS_VACCA</name>
<proteinExistence type="evidence at transcript level"/>
<organism>
    <name type="scientific">Vaccinia virus (strain Ankara)</name>
    <name type="common">VACV</name>
    <dbReference type="NCBI Taxonomy" id="126794"/>
    <lineage>
        <taxon>Viruses</taxon>
        <taxon>Varidnaviria</taxon>
        <taxon>Bamfordvirae</taxon>
        <taxon>Nucleocytoviricota</taxon>
        <taxon>Pokkesviricetes</taxon>
        <taxon>Chitovirales</taxon>
        <taxon>Poxviridae</taxon>
        <taxon>Chordopoxvirinae</taxon>
        <taxon>Orthopoxvirus</taxon>
        <taxon>Vaccinia virus</taxon>
    </lineage>
</organism>
<keyword id="KW-0244">Early protein</keyword>
<keyword id="KW-0945">Host-virus interaction</keyword>
<keyword id="KW-0413">Isomerase</keyword>
<keyword id="KW-0511">Multifunctional enzyme</keyword>
<keyword id="KW-0520">NAD</keyword>
<keyword id="KW-0560">Oxidoreductase</keyword>
<keyword id="KW-0755">Steroidogenesis</keyword>
<keyword id="KW-0899">Viral immunoevasion</keyword>
<sequence>MAVYAVTGGAGFLGRYIVKLLISADDVQEIRVIDIVEDPQPITSKVKVINYIQCDINDFDKVREALDGVNLIIHTAALVDVFGKYTDNEIMKVNYYGTQTILAACVDLGIKYLIYTSSMEAIGPNKHGDPFIGHEHTLYDISPGHVYAKSKRMAEQLVMKANNSVIMNGAKLYTCCLRPTGIYGEGDKLMKVFYEQCKQHGNIMYRTVDDNAVHSRVYVGNAAWMHVLAAKYIQYPGSEIKGNAYFCYDYSPSCSYDMFNLLLMKPLGIEQGSRIPRWMLKMYACKNDMKRILFRKPSLLNNYTLKISNTTFEVRTNNAELDFNYSPIFNVDVAFERTRKWLEESE</sequence>
<evidence type="ECO:0000250" key="1"/>
<evidence type="ECO:0000250" key="2">
    <source>
        <dbReference type="UniProtKB" id="P26670"/>
    </source>
</evidence>
<evidence type="ECO:0000305" key="3"/>